<reference key="1">
    <citation type="journal article" date="2000" name="J. Bacteriol.">
        <title>Mutations in the gerP locus of Bacillus subtilis and Bacillus cereus affect access of germinants to their targets in spores.</title>
        <authorList>
            <person name="Behravan J."/>
            <person name="Chirakkal H."/>
            <person name="Masson A."/>
            <person name="Moir A."/>
        </authorList>
    </citation>
    <scope>NUCLEOTIDE SEQUENCE [GENOMIC DNA]</scope>
    <scope>CHARACTERIZATION</scope>
    <source>
        <strain>ATCC 10876 / DSM 9378 / NRRL B-569</strain>
    </source>
</reference>
<feature type="chain" id="PRO_0000087474" description="Probable spore germination protein GerPE">
    <location>
        <begin position="1"/>
        <end position="128"/>
    </location>
</feature>
<gene>
    <name type="primary">gerPE</name>
</gene>
<dbReference type="EMBL" id="AF053927">
    <property type="protein sequence ID" value="AAC08016.1"/>
    <property type="molecule type" value="Genomic_DNA"/>
</dbReference>
<dbReference type="RefSeq" id="WP_000902319.1">
    <property type="nucleotide sequence ID" value="NZ_VSSM01000002.1"/>
</dbReference>
<dbReference type="GO" id="GO:0030435">
    <property type="term" value="P:sporulation resulting in formation of a cellular spore"/>
    <property type="evidence" value="ECO:0007669"/>
    <property type="project" value="UniProtKB-KW"/>
</dbReference>
<dbReference type="InterPro" id="IPR024496">
    <property type="entry name" value="Spore_germ_GerPE"/>
</dbReference>
<dbReference type="Pfam" id="PF10970">
    <property type="entry name" value="GerPE"/>
    <property type="match status" value="1"/>
</dbReference>
<sequence length="128" mass="14535">MLHHVSIVQNVSIISLGIAAVFQVGDANQMELKSRAIAVHREIPFYIRGEGRFDAFEIFTDEHITIPKRTTDVKLNIVNECPFIEVNNVELRTLLNSGCFQIGNVDYGFNNSRIIQIRQYITDEPSAQ</sequence>
<proteinExistence type="evidence at protein level"/>
<comment type="function">
    <text>Required for the formation of functionally normal spores. Could be involved in the establishment of normal spore coat structure and/or permeability, which allows the access of germinants to their receptor.</text>
</comment>
<comment type="developmental stage">
    <text>Expressed during sporulation, around the time of spore coat synthesis and assembly, in mother cell compartment.</text>
</comment>
<comment type="induction">
    <text>Expression is sigma K-dependent and negatively regulated by GerE.</text>
</comment>
<name>GERPE_BACCE</name>
<accession>O68687</accession>
<keyword id="KW-0309">Germination</keyword>
<keyword id="KW-0749">Sporulation</keyword>
<protein>
    <recommendedName>
        <fullName>Probable spore germination protein GerPE</fullName>
    </recommendedName>
</protein>
<organism>
    <name type="scientific">Bacillus cereus</name>
    <dbReference type="NCBI Taxonomy" id="1396"/>
    <lineage>
        <taxon>Bacteria</taxon>
        <taxon>Bacillati</taxon>
        <taxon>Bacillota</taxon>
        <taxon>Bacilli</taxon>
        <taxon>Bacillales</taxon>
        <taxon>Bacillaceae</taxon>
        <taxon>Bacillus</taxon>
        <taxon>Bacillus cereus group</taxon>
    </lineage>
</organism>